<accession>A7GJJ0</accession>
<keyword id="KW-0067">ATP-binding</keyword>
<keyword id="KW-0963">Cytoplasm</keyword>
<keyword id="KW-0275">Fatty acid biosynthesis</keyword>
<keyword id="KW-0276">Fatty acid metabolism</keyword>
<keyword id="KW-0444">Lipid biosynthesis</keyword>
<keyword id="KW-0443">Lipid metabolism</keyword>
<keyword id="KW-0479">Metal-binding</keyword>
<keyword id="KW-0547">Nucleotide-binding</keyword>
<keyword id="KW-0808">Transferase</keyword>
<keyword id="KW-0862">Zinc</keyword>
<keyword id="KW-0863">Zinc-finger</keyword>
<feature type="chain" id="PRO_0000389725" description="Acetyl-coenzyme A carboxylase carboxyl transferase subunit beta">
    <location>
        <begin position="1"/>
        <end position="289"/>
    </location>
</feature>
<feature type="domain" description="CoA carboxyltransferase N-terminal" evidence="2">
    <location>
        <begin position="34"/>
        <end position="289"/>
    </location>
</feature>
<feature type="zinc finger region" description="C4-type" evidence="1">
    <location>
        <begin position="38"/>
        <end position="60"/>
    </location>
</feature>
<feature type="binding site" evidence="1">
    <location>
        <position position="38"/>
    </location>
    <ligand>
        <name>Zn(2+)</name>
        <dbReference type="ChEBI" id="CHEBI:29105"/>
    </ligand>
</feature>
<feature type="binding site" evidence="1">
    <location>
        <position position="41"/>
    </location>
    <ligand>
        <name>Zn(2+)</name>
        <dbReference type="ChEBI" id="CHEBI:29105"/>
    </ligand>
</feature>
<feature type="binding site" evidence="1">
    <location>
        <position position="57"/>
    </location>
    <ligand>
        <name>Zn(2+)</name>
        <dbReference type="ChEBI" id="CHEBI:29105"/>
    </ligand>
</feature>
<feature type="binding site" evidence="1">
    <location>
        <position position="60"/>
    </location>
    <ligand>
        <name>Zn(2+)</name>
        <dbReference type="ChEBI" id="CHEBI:29105"/>
    </ligand>
</feature>
<name>ACCD_CLOBL</name>
<dbReference type="EC" id="2.1.3.15" evidence="1"/>
<dbReference type="EMBL" id="CP000728">
    <property type="protein sequence ID" value="ABS39400.1"/>
    <property type="molecule type" value="Genomic_DNA"/>
</dbReference>
<dbReference type="RefSeq" id="WP_012101204.1">
    <property type="nucleotide sequence ID" value="NC_009699.1"/>
</dbReference>
<dbReference type="SMR" id="A7GJJ0"/>
<dbReference type="KEGG" id="cbf:CLI_3820"/>
<dbReference type="HOGENOM" id="CLU_015486_1_1_9"/>
<dbReference type="UniPathway" id="UPA00655">
    <property type="reaction ID" value="UER00711"/>
</dbReference>
<dbReference type="Proteomes" id="UP000002410">
    <property type="component" value="Chromosome"/>
</dbReference>
<dbReference type="GO" id="GO:0009317">
    <property type="term" value="C:acetyl-CoA carboxylase complex"/>
    <property type="evidence" value="ECO:0007669"/>
    <property type="project" value="InterPro"/>
</dbReference>
<dbReference type="GO" id="GO:0003989">
    <property type="term" value="F:acetyl-CoA carboxylase activity"/>
    <property type="evidence" value="ECO:0007669"/>
    <property type="project" value="InterPro"/>
</dbReference>
<dbReference type="GO" id="GO:0005524">
    <property type="term" value="F:ATP binding"/>
    <property type="evidence" value="ECO:0007669"/>
    <property type="project" value="UniProtKB-KW"/>
</dbReference>
<dbReference type="GO" id="GO:0016743">
    <property type="term" value="F:carboxyl- or carbamoyltransferase activity"/>
    <property type="evidence" value="ECO:0007669"/>
    <property type="project" value="UniProtKB-UniRule"/>
</dbReference>
<dbReference type="GO" id="GO:0008270">
    <property type="term" value="F:zinc ion binding"/>
    <property type="evidence" value="ECO:0007669"/>
    <property type="project" value="UniProtKB-UniRule"/>
</dbReference>
<dbReference type="GO" id="GO:0006633">
    <property type="term" value="P:fatty acid biosynthetic process"/>
    <property type="evidence" value="ECO:0007669"/>
    <property type="project" value="UniProtKB-KW"/>
</dbReference>
<dbReference type="GO" id="GO:2001295">
    <property type="term" value="P:malonyl-CoA biosynthetic process"/>
    <property type="evidence" value="ECO:0007669"/>
    <property type="project" value="UniProtKB-UniRule"/>
</dbReference>
<dbReference type="Gene3D" id="3.90.226.10">
    <property type="entry name" value="2-enoyl-CoA Hydratase, Chain A, domain 1"/>
    <property type="match status" value="1"/>
</dbReference>
<dbReference type="HAMAP" id="MF_01395">
    <property type="entry name" value="AcetylCoA_CT_beta"/>
    <property type="match status" value="1"/>
</dbReference>
<dbReference type="InterPro" id="IPR034733">
    <property type="entry name" value="AcCoA_carboxyl_beta"/>
</dbReference>
<dbReference type="InterPro" id="IPR000438">
    <property type="entry name" value="Acetyl_CoA_COase_Trfase_b_su"/>
</dbReference>
<dbReference type="InterPro" id="IPR029045">
    <property type="entry name" value="ClpP/crotonase-like_dom_sf"/>
</dbReference>
<dbReference type="InterPro" id="IPR011762">
    <property type="entry name" value="COA_CT_N"/>
</dbReference>
<dbReference type="InterPro" id="IPR041010">
    <property type="entry name" value="Znf-ACC"/>
</dbReference>
<dbReference type="NCBIfam" id="TIGR00515">
    <property type="entry name" value="accD"/>
    <property type="match status" value="1"/>
</dbReference>
<dbReference type="PANTHER" id="PTHR42995">
    <property type="entry name" value="ACETYL-COENZYME A CARBOXYLASE CARBOXYL TRANSFERASE SUBUNIT BETA, CHLOROPLASTIC"/>
    <property type="match status" value="1"/>
</dbReference>
<dbReference type="PANTHER" id="PTHR42995:SF5">
    <property type="entry name" value="ACETYL-COENZYME A CARBOXYLASE CARBOXYL TRANSFERASE SUBUNIT BETA, CHLOROPLASTIC"/>
    <property type="match status" value="1"/>
</dbReference>
<dbReference type="Pfam" id="PF01039">
    <property type="entry name" value="Carboxyl_trans"/>
    <property type="match status" value="1"/>
</dbReference>
<dbReference type="Pfam" id="PF17848">
    <property type="entry name" value="Zn_ribbon_ACC"/>
    <property type="match status" value="1"/>
</dbReference>
<dbReference type="PRINTS" id="PR01070">
    <property type="entry name" value="ACCCTRFRASEB"/>
</dbReference>
<dbReference type="SUPFAM" id="SSF52096">
    <property type="entry name" value="ClpP/crotonase"/>
    <property type="match status" value="1"/>
</dbReference>
<dbReference type="PROSITE" id="PS50980">
    <property type="entry name" value="COA_CT_NTER"/>
    <property type="match status" value="1"/>
</dbReference>
<reference key="1">
    <citation type="submission" date="2007-06" db="EMBL/GenBank/DDBJ databases">
        <authorList>
            <person name="Brinkac L.M."/>
            <person name="Daugherty S."/>
            <person name="Dodson R.J."/>
            <person name="Madupu R."/>
            <person name="Brown J.L."/>
            <person name="Bruce D."/>
            <person name="Detter C."/>
            <person name="Munk C."/>
            <person name="Smith L.A."/>
            <person name="Smith T.J."/>
            <person name="White O."/>
            <person name="Brettin T.S."/>
        </authorList>
    </citation>
    <scope>NUCLEOTIDE SEQUENCE [LARGE SCALE GENOMIC DNA]</scope>
    <source>
        <strain>Langeland / NCTC 10281 / Type F</strain>
    </source>
</reference>
<gene>
    <name evidence="1" type="primary">accD</name>
    <name type="ordered locus">CLI_3820</name>
</gene>
<protein>
    <recommendedName>
        <fullName evidence="1">Acetyl-coenzyme A carboxylase carboxyl transferase subunit beta</fullName>
        <shortName evidence="1">ACCase subunit beta</shortName>
        <shortName evidence="1">Acetyl-CoA carboxylase carboxyltransferase subunit beta</shortName>
        <ecNumber evidence="1">2.1.3.15</ecNumber>
    </recommendedName>
</protein>
<sequence>MLKNLFRKTKYITVSQKNIESYKRENTPTIPDGMWVKCNKCGDILYQNDLEKNYMVCNLCGNHFRIGVKERIKYLFDKDTFKEWDYKIKTENPLDFKGYDEKIEHIKEKTNLSEAVTTGKGKIAGMEAVVCIMDSKFMMGSMGCVVGEKITRAIERAIKLRLPVIIFTASGGARMQEGILSLMQMAKVSSALAKLDEEGLLYVCVLTDPTTGGVTASFAMLGDIILAEPDGLIGFAGKRVIEQTINEKLPEDFQKSEFLLEHGFIDKIVPRSDLRKVLAKLINMHQNSF</sequence>
<proteinExistence type="inferred from homology"/>
<organism>
    <name type="scientific">Clostridium botulinum (strain Langeland / NCTC 10281 / Type F)</name>
    <dbReference type="NCBI Taxonomy" id="441772"/>
    <lineage>
        <taxon>Bacteria</taxon>
        <taxon>Bacillati</taxon>
        <taxon>Bacillota</taxon>
        <taxon>Clostridia</taxon>
        <taxon>Eubacteriales</taxon>
        <taxon>Clostridiaceae</taxon>
        <taxon>Clostridium</taxon>
    </lineage>
</organism>
<evidence type="ECO:0000255" key="1">
    <source>
        <dbReference type="HAMAP-Rule" id="MF_01395"/>
    </source>
</evidence>
<evidence type="ECO:0000255" key="2">
    <source>
        <dbReference type="PROSITE-ProRule" id="PRU01136"/>
    </source>
</evidence>
<comment type="function">
    <text evidence="1">Component of the acetyl coenzyme A carboxylase (ACC) complex. Biotin carboxylase (BC) catalyzes the carboxylation of biotin on its carrier protein (BCCP) and then the CO(2) group is transferred by the transcarboxylase to acetyl-CoA to form malonyl-CoA.</text>
</comment>
<comment type="catalytic activity">
    <reaction evidence="1">
        <text>N(6)-carboxybiotinyl-L-lysyl-[protein] + acetyl-CoA = N(6)-biotinyl-L-lysyl-[protein] + malonyl-CoA</text>
        <dbReference type="Rhea" id="RHEA:54728"/>
        <dbReference type="Rhea" id="RHEA-COMP:10505"/>
        <dbReference type="Rhea" id="RHEA-COMP:10506"/>
        <dbReference type="ChEBI" id="CHEBI:57288"/>
        <dbReference type="ChEBI" id="CHEBI:57384"/>
        <dbReference type="ChEBI" id="CHEBI:83144"/>
        <dbReference type="ChEBI" id="CHEBI:83145"/>
        <dbReference type="EC" id="2.1.3.15"/>
    </reaction>
</comment>
<comment type="cofactor">
    <cofactor evidence="1">
        <name>Zn(2+)</name>
        <dbReference type="ChEBI" id="CHEBI:29105"/>
    </cofactor>
    <text evidence="1">Binds 1 zinc ion per subunit.</text>
</comment>
<comment type="pathway">
    <text evidence="1">Lipid metabolism; malonyl-CoA biosynthesis; malonyl-CoA from acetyl-CoA: step 1/1.</text>
</comment>
<comment type="subunit">
    <text evidence="1">Acetyl-CoA carboxylase is a heterohexamer composed of biotin carboxyl carrier protein (AccB), biotin carboxylase (AccC) and two subunits each of ACCase subunit alpha (AccA) and ACCase subunit beta (AccD).</text>
</comment>
<comment type="subcellular location">
    <subcellularLocation>
        <location evidence="1">Cytoplasm</location>
    </subcellularLocation>
</comment>
<comment type="similarity">
    <text evidence="1">Belongs to the AccD/PCCB family.</text>
</comment>